<protein>
    <recommendedName>
        <fullName>Protein phosphatase 1A</fullName>
        <ecNumber>3.1.3.16</ecNumber>
    </recommendedName>
    <alternativeName>
        <fullName>Protein phosphatase 2C isoform alpha</fullName>
        <shortName>PP2C-alpha</shortName>
    </alternativeName>
</protein>
<sequence length="382" mass="42530">MGAFLDKPKMEKHNAQGQGNGLRYGLSSMQGWRVEMEDAHTAVIGLPSGLETWSFFAVYDGHAGSQVAKYCCEHLLDHITNNQDFKGSAGAPSVENVKNGIRTGFLEIDEHMRVMSEKKHGADRSGSTAVGVLISPQHTYFINCGDSRGLLCRNRKVYFFTQDHKPSNPLEKERIQNAGGSVMIQRVNGSLAVSRALGDFDYKCVHGKGPTEQLVSPEPEVHDIERSEEDDQFIILACDGIWDVMGNEELCDFVRSRLEVTDDLEKVCNEVVDTCLYKGSRDNMSVILICFPNAPKVSPEAVKKEEELDKYLESRVEEIIKKQGEGVPDLVHVMRTLASENIPSLPPGGELASKRNVIEAVYNRLNPYKNDDTDSTSTDDMW</sequence>
<reference key="1">
    <citation type="journal article" date="1998" name="J. Neurosci. Res.">
        <title>Protein phosphatase type-2C isozymes present in vertebrate retinae: purification, characterization, and localization in photoreceptors.</title>
        <authorList>
            <person name="Klumpp S."/>
            <person name="Selke D."/>
            <person name="Fischer D."/>
            <person name="Baumann A."/>
            <person name="Mueller F."/>
            <person name="Thanos S."/>
        </authorList>
    </citation>
    <scope>NUCLEOTIDE SEQUENCE [MRNA]</scope>
    <source>
        <tissue>Retina</tissue>
    </source>
</reference>
<gene>
    <name type="primary">PPM1A</name>
</gene>
<comment type="function">
    <text evidence="1">Enzyme with a broad specificity. Negatively regulates TGF-beta signaling through dephosphorylating SMAD2 and SMAD3, resulting in their dissociation from SMAD4, nuclear export of the SMADs and termination of the TGF-beta-mediated signaling (By similarity). Dephosphorylates PRKAA1 and PRKAA2. Plays an important role in the termination of TNF-alpha-mediated NF-kappa-B activation through dephosphorylating and inactivating IKBKB/IKKB (By similarity).</text>
</comment>
<comment type="catalytic activity">
    <reaction>
        <text>O-phospho-L-seryl-[protein] + H2O = L-seryl-[protein] + phosphate</text>
        <dbReference type="Rhea" id="RHEA:20629"/>
        <dbReference type="Rhea" id="RHEA-COMP:9863"/>
        <dbReference type="Rhea" id="RHEA-COMP:11604"/>
        <dbReference type="ChEBI" id="CHEBI:15377"/>
        <dbReference type="ChEBI" id="CHEBI:29999"/>
        <dbReference type="ChEBI" id="CHEBI:43474"/>
        <dbReference type="ChEBI" id="CHEBI:83421"/>
        <dbReference type="EC" id="3.1.3.16"/>
    </reaction>
</comment>
<comment type="catalytic activity">
    <reaction>
        <text>O-phospho-L-threonyl-[protein] + H2O = L-threonyl-[protein] + phosphate</text>
        <dbReference type="Rhea" id="RHEA:47004"/>
        <dbReference type="Rhea" id="RHEA-COMP:11060"/>
        <dbReference type="Rhea" id="RHEA-COMP:11605"/>
        <dbReference type="ChEBI" id="CHEBI:15377"/>
        <dbReference type="ChEBI" id="CHEBI:30013"/>
        <dbReference type="ChEBI" id="CHEBI:43474"/>
        <dbReference type="ChEBI" id="CHEBI:61977"/>
        <dbReference type="EC" id="3.1.3.16"/>
    </reaction>
</comment>
<comment type="cofactor">
    <cofactor>
        <name>Mg(2+)</name>
        <dbReference type="ChEBI" id="CHEBI:18420"/>
    </cofactor>
    <cofactor>
        <name>Mn(2+)</name>
        <dbReference type="ChEBI" id="CHEBI:29035"/>
    </cofactor>
    <text>Binds 2 magnesium or manganese ions per subunit.</text>
</comment>
<comment type="subunit">
    <text evidence="1">Monomer. Interacts with SMAD2; the interaction dephosphorylates SMAD2 in its C-terminal SXS motif resulting in disruption of the SMAD2/SMAD4 complex, SMAD2 nuclear export and termination of the TGF-beta-mediated signaling. Interacts with SMAD2; the interaction dephosphorylates SMAD2 in its C-terminal SXS motif resulting in disruption of the SMAD2/SMAD4 complex, SMAD2 nuclear export and termination of the TGF-beta-mediated signaling (By similarity). Interacts with the phosphorylated form of IKBKB/IKKB (By similarity).</text>
</comment>
<comment type="subcellular location">
    <subcellularLocation>
        <location evidence="2">Nucleus</location>
    </subcellularLocation>
    <subcellularLocation>
        <location evidence="2">Cytoplasm</location>
        <location evidence="2">Cytosol</location>
    </subcellularLocation>
    <subcellularLocation>
        <location evidence="2">Membrane</location>
        <topology evidence="2">Lipid-anchor</topology>
    </subcellularLocation>
    <text evidence="3">Weakly associates at the membrane and N-myristoylation mediates the membrane localization.</text>
</comment>
<comment type="PTM">
    <text evidence="1">N-myristoylation is essential for the recognition of its substrates for dephosphorylation.</text>
</comment>
<comment type="similarity">
    <text evidence="5">Belongs to the PP2C family.</text>
</comment>
<organism>
    <name type="scientific">Bos taurus</name>
    <name type="common">Bovine</name>
    <dbReference type="NCBI Taxonomy" id="9913"/>
    <lineage>
        <taxon>Eukaryota</taxon>
        <taxon>Metazoa</taxon>
        <taxon>Chordata</taxon>
        <taxon>Craniata</taxon>
        <taxon>Vertebrata</taxon>
        <taxon>Euteleostomi</taxon>
        <taxon>Mammalia</taxon>
        <taxon>Eutheria</taxon>
        <taxon>Laurasiatheria</taxon>
        <taxon>Artiodactyla</taxon>
        <taxon>Ruminantia</taxon>
        <taxon>Pecora</taxon>
        <taxon>Bovidae</taxon>
        <taxon>Bovinae</taxon>
        <taxon>Bos</taxon>
    </lineage>
</organism>
<name>PPM1A_BOVIN</name>
<proteinExistence type="evidence at transcript level"/>
<accession>O62829</accession>
<dbReference type="EC" id="3.1.3.16"/>
<dbReference type="EMBL" id="AJ005457">
    <property type="protein sequence ID" value="CAA06554.1"/>
    <property type="molecule type" value="mRNA"/>
</dbReference>
<dbReference type="RefSeq" id="NP_001289701.1">
    <property type="nucleotide sequence ID" value="NM_001302772.1"/>
</dbReference>
<dbReference type="RefSeq" id="NP_776854.1">
    <property type="nucleotide sequence ID" value="NM_174429.3"/>
</dbReference>
<dbReference type="RefSeq" id="XP_015328708.1">
    <property type="nucleotide sequence ID" value="XM_015473222.3"/>
</dbReference>
<dbReference type="RefSeq" id="XP_024853041.1">
    <property type="nucleotide sequence ID" value="XM_024997273.2"/>
</dbReference>
<dbReference type="RefSeq" id="XP_059746211.1">
    <property type="nucleotide sequence ID" value="XM_059890228.1"/>
</dbReference>
<dbReference type="RefSeq" id="XP_059746212.1">
    <property type="nucleotide sequence ID" value="XM_059890229.1"/>
</dbReference>
<dbReference type="SMR" id="O62829"/>
<dbReference type="FunCoup" id="O62829">
    <property type="interactions" value="2523"/>
</dbReference>
<dbReference type="STRING" id="9913.ENSBTAP00000057716"/>
<dbReference type="PaxDb" id="9913-ENSBTAP00000024128"/>
<dbReference type="GeneID" id="281994"/>
<dbReference type="KEGG" id="bta:281994"/>
<dbReference type="CTD" id="5494"/>
<dbReference type="VEuPathDB" id="HostDB:ENSBTAG00000018127"/>
<dbReference type="eggNOG" id="KOG0697">
    <property type="taxonomic scope" value="Eukaryota"/>
</dbReference>
<dbReference type="HOGENOM" id="CLU_013173_4_0_1"/>
<dbReference type="InParanoid" id="O62829"/>
<dbReference type="OrthoDB" id="10264738at2759"/>
<dbReference type="TreeFam" id="TF313590"/>
<dbReference type="Reactome" id="R-BTA-2173795">
    <property type="pathway name" value="Downregulation of SMAD2/3:SMAD4 transcriptional activity"/>
</dbReference>
<dbReference type="Reactome" id="R-BTA-380972">
    <property type="pathway name" value="Energy dependent regulation of mTOR by LKB1-AMPK"/>
</dbReference>
<dbReference type="Proteomes" id="UP000009136">
    <property type="component" value="Chromosome 10"/>
</dbReference>
<dbReference type="Bgee" id="ENSBTAG00000018127">
    <property type="expression patterns" value="Expressed in longissimus thoracis muscle and 106 other cell types or tissues"/>
</dbReference>
<dbReference type="GO" id="GO:0005829">
    <property type="term" value="C:cytosol"/>
    <property type="evidence" value="ECO:0000250"/>
    <property type="project" value="UniProtKB"/>
</dbReference>
<dbReference type="GO" id="GO:0016020">
    <property type="term" value="C:membrane"/>
    <property type="evidence" value="ECO:0000250"/>
    <property type="project" value="UniProtKB"/>
</dbReference>
<dbReference type="GO" id="GO:0005634">
    <property type="term" value="C:nucleus"/>
    <property type="evidence" value="ECO:0000318"/>
    <property type="project" value="GO_Central"/>
</dbReference>
<dbReference type="GO" id="GO:0000287">
    <property type="term" value="F:magnesium ion binding"/>
    <property type="evidence" value="ECO:0007669"/>
    <property type="project" value="InterPro"/>
</dbReference>
<dbReference type="GO" id="GO:0030145">
    <property type="term" value="F:manganese ion binding"/>
    <property type="evidence" value="ECO:0007669"/>
    <property type="project" value="InterPro"/>
</dbReference>
<dbReference type="GO" id="GO:0004721">
    <property type="term" value="F:phosphoprotein phosphatase activity"/>
    <property type="evidence" value="ECO:0000250"/>
    <property type="project" value="AgBase"/>
</dbReference>
<dbReference type="GO" id="GO:0004722">
    <property type="term" value="F:protein serine/threonine phosphatase activity"/>
    <property type="evidence" value="ECO:0000318"/>
    <property type="project" value="GO_Central"/>
</dbReference>
<dbReference type="GO" id="GO:0070412">
    <property type="term" value="F:R-SMAD binding"/>
    <property type="evidence" value="ECO:0000250"/>
    <property type="project" value="UniProtKB"/>
</dbReference>
<dbReference type="GO" id="GO:0006499">
    <property type="term" value="P:N-terminal protein myristoylation"/>
    <property type="evidence" value="ECO:0000250"/>
    <property type="project" value="UniProtKB"/>
</dbReference>
<dbReference type="GO" id="GO:0043124">
    <property type="term" value="P:negative regulation of canonical NF-kappaB signal transduction"/>
    <property type="evidence" value="ECO:0000250"/>
    <property type="project" value="UniProtKB"/>
</dbReference>
<dbReference type="GO" id="GO:1901223">
    <property type="term" value="P:negative regulation of non-canonical NF-kappaB signal transduction"/>
    <property type="evidence" value="ECO:0000250"/>
    <property type="project" value="UniProtKB"/>
</dbReference>
<dbReference type="GO" id="GO:0043123">
    <property type="term" value="P:positive regulation of canonical NF-kappaB signal transduction"/>
    <property type="evidence" value="ECO:0000250"/>
    <property type="project" value="AgBase"/>
</dbReference>
<dbReference type="GO" id="GO:0090263">
    <property type="term" value="P:positive regulation of canonical Wnt signaling pathway"/>
    <property type="evidence" value="ECO:0000318"/>
    <property type="project" value="GO_Central"/>
</dbReference>
<dbReference type="GO" id="GO:0006470">
    <property type="term" value="P:protein dephosphorylation"/>
    <property type="evidence" value="ECO:0000250"/>
    <property type="project" value="UniProtKB"/>
</dbReference>
<dbReference type="GO" id="GO:0043122">
    <property type="term" value="P:regulation of canonical NF-kappaB signal transduction"/>
    <property type="evidence" value="ECO:0000318"/>
    <property type="project" value="GO_Central"/>
</dbReference>
<dbReference type="CDD" id="cd00143">
    <property type="entry name" value="PP2Cc"/>
    <property type="match status" value="1"/>
</dbReference>
<dbReference type="FunFam" id="3.60.40.10:FF:000001">
    <property type="entry name" value="protein phosphatase 1B isoform X1"/>
    <property type="match status" value="1"/>
</dbReference>
<dbReference type="FunFam" id="1.10.10.430:FF:000002">
    <property type="entry name" value="Protein phosphatase, Mg2+/Mn2+ dependent 1A"/>
    <property type="match status" value="1"/>
</dbReference>
<dbReference type="Gene3D" id="1.10.10.430">
    <property type="entry name" value="Phosphatase 2C, C-terminal domain suprefamily"/>
    <property type="match status" value="1"/>
</dbReference>
<dbReference type="Gene3D" id="3.60.40.10">
    <property type="entry name" value="PPM-type phosphatase domain"/>
    <property type="match status" value="1"/>
</dbReference>
<dbReference type="InterPro" id="IPR015655">
    <property type="entry name" value="PP2C"/>
</dbReference>
<dbReference type="InterPro" id="IPR000222">
    <property type="entry name" value="PP2C_BS"/>
</dbReference>
<dbReference type="InterPro" id="IPR012911">
    <property type="entry name" value="PP2C_C"/>
</dbReference>
<dbReference type="InterPro" id="IPR036580">
    <property type="entry name" value="PP2C_C_sf"/>
</dbReference>
<dbReference type="InterPro" id="IPR036457">
    <property type="entry name" value="PPM-type-like_dom_sf"/>
</dbReference>
<dbReference type="InterPro" id="IPR001932">
    <property type="entry name" value="PPM-type_phosphatase-like_dom"/>
</dbReference>
<dbReference type="PANTHER" id="PTHR47992">
    <property type="entry name" value="PROTEIN PHOSPHATASE"/>
    <property type="match status" value="1"/>
</dbReference>
<dbReference type="Pfam" id="PF00481">
    <property type="entry name" value="PP2C"/>
    <property type="match status" value="1"/>
</dbReference>
<dbReference type="Pfam" id="PF07830">
    <property type="entry name" value="PP2C_C"/>
    <property type="match status" value="1"/>
</dbReference>
<dbReference type="SMART" id="SM00332">
    <property type="entry name" value="PP2Cc"/>
    <property type="match status" value="1"/>
</dbReference>
<dbReference type="SUPFAM" id="SSF81606">
    <property type="entry name" value="PP2C-like"/>
    <property type="match status" value="1"/>
</dbReference>
<dbReference type="SUPFAM" id="SSF81601">
    <property type="entry name" value="Protein serine/threonine phosphatase 2C, C-terminal domain"/>
    <property type="match status" value="1"/>
</dbReference>
<dbReference type="PROSITE" id="PS01032">
    <property type="entry name" value="PPM_1"/>
    <property type="match status" value="1"/>
</dbReference>
<dbReference type="PROSITE" id="PS51746">
    <property type="entry name" value="PPM_2"/>
    <property type="match status" value="1"/>
</dbReference>
<keyword id="KW-0963">Cytoplasm</keyword>
<keyword id="KW-0378">Hydrolase</keyword>
<keyword id="KW-0449">Lipoprotein</keyword>
<keyword id="KW-0460">Magnesium</keyword>
<keyword id="KW-0464">Manganese</keyword>
<keyword id="KW-0472">Membrane</keyword>
<keyword id="KW-0479">Metal-binding</keyword>
<keyword id="KW-0519">Myristate</keyword>
<keyword id="KW-0539">Nucleus</keyword>
<keyword id="KW-0597">Phosphoprotein</keyword>
<keyword id="KW-0904">Protein phosphatase</keyword>
<keyword id="KW-1185">Reference proteome</keyword>
<evidence type="ECO:0000250" key="1"/>
<evidence type="ECO:0000250" key="2">
    <source>
        <dbReference type="UniProtKB" id="P35813"/>
    </source>
</evidence>
<evidence type="ECO:0000250" key="3">
    <source>
        <dbReference type="UniProtKB" id="P49443"/>
    </source>
</evidence>
<evidence type="ECO:0000255" key="4">
    <source>
        <dbReference type="PROSITE-ProRule" id="PRU01082"/>
    </source>
</evidence>
<evidence type="ECO:0000305" key="5"/>
<feature type="initiator methionine" description="Removed" evidence="2">
    <location>
        <position position="1"/>
    </location>
</feature>
<feature type="chain" id="PRO_0000057740" description="Protein phosphatase 1A">
    <location>
        <begin position="2"/>
        <end position="382"/>
    </location>
</feature>
<feature type="domain" description="PPM-type phosphatase" evidence="4">
    <location>
        <begin position="23"/>
        <end position="291"/>
    </location>
</feature>
<feature type="binding site" evidence="1">
    <location>
        <position position="60"/>
    </location>
    <ligand>
        <name>Mn(2+)</name>
        <dbReference type="ChEBI" id="CHEBI:29035"/>
        <label>1</label>
    </ligand>
</feature>
<feature type="binding site" evidence="1">
    <location>
        <position position="60"/>
    </location>
    <ligand>
        <name>Mn(2+)</name>
        <dbReference type="ChEBI" id="CHEBI:29035"/>
        <label>2</label>
    </ligand>
</feature>
<feature type="binding site" evidence="1">
    <location>
        <position position="61"/>
    </location>
    <ligand>
        <name>Mn(2+)</name>
        <dbReference type="ChEBI" id="CHEBI:29035"/>
        <label>1</label>
    </ligand>
</feature>
<feature type="binding site" evidence="1">
    <location>
        <position position="239"/>
    </location>
    <ligand>
        <name>Mn(2+)</name>
        <dbReference type="ChEBI" id="CHEBI:29035"/>
        <label>2</label>
    </ligand>
</feature>
<feature type="binding site" evidence="1">
    <location>
        <position position="282"/>
    </location>
    <ligand>
        <name>Mn(2+)</name>
        <dbReference type="ChEBI" id="CHEBI:29035"/>
        <label>2</label>
    </ligand>
</feature>
<feature type="modified residue" description="Phosphoserine" evidence="2">
    <location>
        <position position="375"/>
    </location>
</feature>
<feature type="modified residue" description="Phosphoserine" evidence="3">
    <location>
        <position position="377"/>
    </location>
</feature>
<feature type="lipid moiety-binding region" description="N-myristoyl glycine" evidence="2">
    <location>
        <position position="2"/>
    </location>
</feature>